<sequence>MQTYGNPNPTYGWWAGNAGTTNRSGKFLAAHIAHTGLMAFWAGSFTLFELSRYDPSVPMGHQPLVALPHLATLGIGVGDGGVITDTYPIVVTAVLHLVLSMVYAAGGLMHSLLFNGDIGEMGVKWARKFDFKWDDPDKLTFILGHHLFLLGLGNVQFVEWAKYYGLYDNAEGVVRTVVPNLNIGMVWNAQFNFLAINSLEDVMGGHAFLALFMMSGGLWHIVTKQAGEYTTFKGKGILSAEAQLSWALAGVGWMALVAAFWCASNTTIYPDTFFGEVLDLKFSISPYWVDTANLPEGTYTSRAWLTNIHYYLGFFYIQGHLWHALRALGFDFKRVSNAIGNADSATITLN</sequence>
<reference key="1">
    <citation type="journal article" date="2003" name="Nature">
        <title>Genome divergence in two Prochlorococcus ecotypes reflects oceanic niche differentiation.</title>
        <authorList>
            <person name="Rocap G."/>
            <person name="Larimer F.W."/>
            <person name="Lamerdin J.E."/>
            <person name="Malfatti S."/>
            <person name="Chain P."/>
            <person name="Ahlgren N.A."/>
            <person name="Arellano A."/>
            <person name="Coleman M."/>
            <person name="Hauser L."/>
            <person name="Hess W.R."/>
            <person name="Johnson Z.I."/>
            <person name="Land M.L."/>
            <person name="Lindell D."/>
            <person name="Post A.F."/>
            <person name="Regala W."/>
            <person name="Shah M."/>
            <person name="Shaw S.L."/>
            <person name="Steglich C."/>
            <person name="Sullivan M.B."/>
            <person name="Ting C.S."/>
            <person name="Tolonen A."/>
            <person name="Webb E.A."/>
            <person name="Zinser E.R."/>
            <person name="Chisholm S.W."/>
        </authorList>
    </citation>
    <scope>NUCLEOTIDE SEQUENCE [LARGE SCALE GENOMIC DNA]</scope>
    <source>
        <strain>MIT 9313</strain>
    </source>
</reference>
<reference key="2">
    <citation type="journal article" date="2003" name="Nature">
        <title>Low-light-adapted Prochlorococcus species possess specific antennae for each photosystem.</title>
        <authorList>
            <person name="Bibby T.S."/>
            <person name="Mary I."/>
            <person name="Nield J."/>
            <person name="Partensky F."/>
            <person name="Barber J."/>
        </authorList>
    </citation>
    <scope>SUBCELLULAR LOCATION</scope>
    <scope>INDUCTION</scope>
    <scope>INVOLVEMENT IN COMPLEXES WITH PHOTOSYSTEM I</scope>
    <scope>SUBUNIT</scope>
</reference>
<proteinExistence type="evidence at protein level"/>
<evidence type="ECO:0000250" key="1">
    <source>
        <dbReference type="UniProtKB" id="Q6Q972"/>
    </source>
</evidence>
<evidence type="ECO:0000255" key="2"/>
<evidence type="ECO:0000269" key="3">
    <source>
    </source>
</evidence>
<evidence type="ECO:0000305" key="4"/>
<comment type="function">
    <text evidence="1">The antenna complex functions as a light receptor, it captures and delivers excitation energy to photosystems I. The Prochlorales pcb genes are not related to higher plant LHCs.</text>
</comment>
<comment type="cofactor">
    <cofactor evidence="1">
        <name>divinyl chlorophyll a</name>
        <dbReference type="ChEBI" id="CHEBI:73095"/>
    </cofactor>
</comment>
<comment type="cofactor">
    <cofactor evidence="1">
        <name>divinyl chlorophyll b</name>
        <dbReference type="ChEBI" id="CHEBI:73096"/>
    </cofactor>
</comment>
<comment type="subunit">
    <text evidence="1 3">The antenna complex consists of divinyl chlorophylls (a and b) and divinyl chlorophyll a/b binding proteins (By similarity). Under iron-starvation forms a complex with PSI, consisting of a PSI trimer surrounded by a ring composed of 18 PcbB subunits.</text>
</comment>
<comment type="subcellular location">
    <subcellularLocation>
        <location evidence="3">Cellular thylakoid membrane</location>
        <topology evidence="3">Multi-pass membrane protein</topology>
    </subcellularLocation>
</comment>
<comment type="induction">
    <text evidence="3">By iron starvation.</text>
</comment>
<comment type="similarity">
    <text evidence="4">Belongs to the PsbB/PsbC family. IsiA/Pcb subfamily.</text>
</comment>
<dbReference type="EMBL" id="BX548175">
    <property type="protein sequence ID" value="CAE21221.1"/>
    <property type="molecule type" value="Genomic_DNA"/>
</dbReference>
<dbReference type="RefSeq" id="WP_011130418.1">
    <property type="nucleotide sequence ID" value="NC_005071.1"/>
</dbReference>
<dbReference type="SMR" id="Q7V6U4"/>
<dbReference type="KEGG" id="pmt:PMT_1046"/>
<dbReference type="eggNOG" id="ENOG5033QV9">
    <property type="taxonomic scope" value="Bacteria"/>
</dbReference>
<dbReference type="HOGENOM" id="CLU_028310_0_0_3"/>
<dbReference type="OrthoDB" id="9429529at2"/>
<dbReference type="Proteomes" id="UP000001423">
    <property type="component" value="Chromosome"/>
</dbReference>
<dbReference type="GO" id="GO:0009522">
    <property type="term" value="C:photosystem I"/>
    <property type="evidence" value="ECO:0007669"/>
    <property type="project" value="UniProtKB-KW"/>
</dbReference>
<dbReference type="GO" id="GO:0031676">
    <property type="term" value="C:plasma membrane-derived thylakoid membrane"/>
    <property type="evidence" value="ECO:0007669"/>
    <property type="project" value="UniProtKB-SubCell"/>
</dbReference>
<dbReference type="GO" id="GO:0016168">
    <property type="term" value="F:chlorophyll binding"/>
    <property type="evidence" value="ECO:0007669"/>
    <property type="project" value="UniProtKB-KW"/>
</dbReference>
<dbReference type="GO" id="GO:0009767">
    <property type="term" value="P:photosynthetic electron transport chain"/>
    <property type="evidence" value="ECO:0007669"/>
    <property type="project" value="InterPro"/>
</dbReference>
<dbReference type="InterPro" id="IPR000932">
    <property type="entry name" value="PS_antenna-like"/>
</dbReference>
<dbReference type="InterPro" id="IPR036001">
    <property type="entry name" value="PS_II_antenna-like_sf"/>
</dbReference>
<dbReference type="NCBIfam" id="TIGR03041">
    <property type="entry name" value="PS_antenn_a_b"/>
    <property type="match status" value="1"/>
</dbReference>
<dbReference type="Pfam" id="PF00421">
    <property type="entry name" value="PSII"/>
    <property type="match status" value="1"/>
</dbReference>
<dbReference type="SUPFAM" id="SSF161077">
    <property type="entry name" value="Photosystem II antenna protein-like"/>
    <property type="match status" value="1"/>
</dbReference>
<gene>
    <name type="primary">pcbB</name>
    <name type="ordered locus">PMT_1046</name>
</gene>
<protein>
    <recommendedName>
        <fullName>Divinyl chlorophyll a/b light-harvesting protein PcbB</fullName>
    </recommendedName>
</protein>
<name>PCBB_PROMM</name>
<accession>Q7V6U4</accession>
<feature type="chain" id="PRO_0000077547" description="Divinyl chlorophyll a/b light-harvesting protein PcbB">
    <location>
        <begin position="1"/>
        <end position="350"/>
    </location>
</feature>
<feature type="transmembrane region" description="Helical" evidence="2">
    <location>
        <begin position="27"/>
        <end position="47"/>
    </location>
</feature>
<feature type="transmembrane region" description="Helical" evidence="2">
    <location>
        <begin position="89"/>
        <end position="109"/>
    </location>
</feature>
<feature type="transmembrane region" description="Helical" evidence="2">
    <location>
        <begin position="141"/>
        <end position="161"/>
    </location>
</feature>
<feature type="transmembrane region" description="Helical" evidence="2">
    <location>
        <begin position="202"/>
        <end position="222"/>
    </location>
</feature>
<feature type="transmembrane region" description="Helical" evidence="2">
    <location>
        <begin position="244"/>
        <end position="264"/>
    </location>
</feature>
<feature type="transmembrane region" description="Helical" evidence="2">
    <location>
        <begin position="305"/>
        <end position="325"/>
    </location>
</feature>
<keyword id="KW-0148">Chlorophyll</keyword>
<keyword id="KW-0157">Chromophore</keyword>
<keyword id="KW-0472">Membrane</keyword>
<keyword id="KW-0602">Photosynthesis</keyword>
<keyword id="KW-0603">Photosystem I</keyword>
<keyword id="KW-1185">Reference proteome</keyword>
<keyword id="KW-0793">Thylakoid</keyword>
<keyword id="KW-0812">Transmembrane</keyword>
<keyword id="KW-1133">Transmembrane helix</keyword>
<organism>
    <name type="scientific">Prochlorococcus marinus (strain MIT 9313)</name>
    <dbReference type="NCBI Taxonomy" id="74547"/>
    <lineage>
        <taxon>Bacteria</taxon>
        <taxon>Bacillati</taxon>
        <taxon>Cyanobacteriota</taxon>
        <taxon>Cyanophyceae</taxon>
        <taxon>Synechococcales</taxon>
        <taxon>Prochlorococcaceae</taxon>
        <taxon>Prochlorococcus</taxon>
    </lineage>
</organism>